<name>NLP95_PHYCP</name>
<accession>A0A2R2Z560</accession>
<comment type="function">
    <text evidence="4">Secreted effector that contributes strongly to virulence during infection by P.capsici.</text>
</comment>
<comment type="subcellular location">
    <subcellularLocation>
        <location evidence="7">Secreted</location>
    </subcellularLocation>
</comment>
<comment type="induction">
    <text evidence="4">Differentially expressed during the developmental and plant infection phases.</text>
</comment>
<comment type="domain">
    <text evidence="7">Key residues/motif important for the effector activities are degenerated in most NLPs, including the nlp24 peptide consisting of the conserved region I (11-aa immunogenic part) and conserved region II (the heptapeptide GHRHDWE motif) that is important for phytotoxic activity.</text>
</comment>
<comment type="similarity">
    <text evidence="6">Belongs to the Necrosis inducing protein (NPP1) family.</text>
</comment>
<protein>
    <recommendedName>
        <fullName evidence="5">NLP effector protein Pc109095</fullName>
    </recommendedName>
    <alternativeName>
        <fullName evidence="5">Necrosis-inducing Pc109095</fullName>
    </alternativeName>
    <alternativeName>
        <fullName evidence="5">Nep1-like protein Pc109095</fullName>
    </alternativeName>
</protein>
<gene>
    <name evidence="5" type="ORF">Pc109095</name>
</gene>
<evidence type="ECO:0000250" key="1">
    <source>
        <dbReference type="UniProtKB" id="L7NCS1"/>
    </source>
</evidence>
<evidence type="ECO:0000255" key="2"/>
<evidence type="ECO:0000255" key="3">
    <source>
        <dbReference type="PROSITE-ProRule" id="PRU00498"/>
    </source>
</evidence>
<evidence type="ECO:0000269" key="4">
    <source>
    </source>
</evidence>
<evidence type="ECO:0000303" key="5">
    <source>
    </source>
</evidence>
<evidence type="ECO:0000305" key="6"/>
<evidence type="ECO:0000305" key="7">
    <source>
    </source>
</evidence>
<proteinExistence type="evidence at transcript level"/>
<sequence>MKFIFAFVLCLAVAQTALGAIIGHDKVQPFAQPDPVTISEKAAVKYKPQLVIFDSCVSFPAVNAAGDITGGLKGTSGTDACTKAPLGSQVYGRSTWYQGKWAMMFAWYFPKNFWNLESRSRHLWANMVLWLDNPALETPTILGASLSRQTLEVPKWLFIPSGVQQKNSYSKATPIPPMGFVGTQQIRTARIGRFQYTYNYTGGSTISTRVSQSYPDTSGWVGLDFTYLDGQYQDLIMWNQLTDQARAALESADFGRDTKVPFNDKNFEAALAQAWPF</sequence>
<reference key="1">
    <citation type="submission" date="2017-05" db="EMBL/GenBank/DDBJ databases">
        <authorList>
            <person name="Song R."/>
            <person name="Chenine A.L."/>
            <person name="Ruprecht R.M."/>
        </authorList>
    </citation>
    <scope>NUCLEOTIDE SEQUENCE [MRNA]</scope>
    <source>
        <strain>Pc537</strain>
    </source>
</reference>
<reference key="2">
    <citation type="journal article" date="2018" name="Mol. Genet. Genomics">
        <title>Identification and functional analysis of the NLP-encoding genes from the phytopathogenic oomycete Phytophthora capsici.</title>
        <authorList>
            <person name="Chen X.R."/>
            <person name="Huang S.X."/>
            <person name="Zhang Y."/>
            <person name="Sheng G.L."/>
            <person name="Li Y.P."/>
            <person name="Zhu F."/>
        </authorList>
    </citation>
    <scope>NUCLEOTIDE SEQUENCE [MRNA]</scope>
    <scope>FUNCTION</scope>
    <scope>DOMAIN</scope>
    <scope>INDUCTION</scope>
    <source>
        <strain>Pc537</strain>
    </source>
</reference>
<organism>
    <name type="scientific">Phytophthora capsici</name>
    <dbReference type="NCBI Taxonomy" id="4784"/>
    <lineage>
        <taxon>Eukaryota</taxon>
        <taxon>Sar</taxon>
        <taxon>Stramenopiles</taxon>
        <taxon>Oomycota</taxon>
        <taxon>Peronosporales</taxon>
        <taxon>Peronosporaceae</taxon>
        <taxon>Phytophthora</taxon>
    </lineage>
</organism>
<feature type="signal peptide" evidence="2">
    <location>
        <begin position="1"/>
        <end position="19"/>
    </location>
</feature>
<feature type="chain" id="PRO_5015302837" description="NLP effector protein Pc109095">
    <location>
        <begin position="20"/>
        <end position="277"/>
    </location>
</feature>
<feature type="short sequence motif" description="Hepta-peptide GHRHDWE motif" evidence="1">
    <location>
        <begin position="119"/>
        <end position="125"/>
    </location>
</feature>
<feature type="glycosylation site" description="N-linked (GlcNAc...) asparagine" evidence="3">
    <location>
        <position position="199"/>
    </location>
</feature>
<dbReference type="EMBL" id="MF135587">
    <property type="protein sequence ID" value="AUD40033.1"/>
    <property type="molecule type" value="mRNA"/>
</dbReference>
<dbReference type="SMR" id="A0A2R2Z560"/>
<dbReference type="VEuPathDB" id="FungiDB:DVH05_026363"/>
<dbReference type="PHI-base" id="PHI:8055"/>
<dbReference type="GO" id="GO:0005576">
    <property type="term" value="C:extracellular region"/>
    <property type="evidence" value="ECO:0007669"/>
    <property type="project" value="UniProtKB-SubCell"/>
</dbReference>
<dbReference type="InterPro" id="IPR008701">
    <property type="entry name" value="NPP1"/>
</dbReference>
<dbReference type="PANTHER" id="PTHR33657">
    <property type="entry name" value="DOMAIN PROTEIN, PUTATIVE (AFU_ORTHOLOGUE AFUA_5G00600)-RELATED"/>
    <property type="match status" value="1"/>
</dbReference>
<dbReference type="PANTHER" id="PTHR33657:SF8">
    <property type="entry name" value="DOMAIN PROTEIN, PUTATIVE (AFU_ORTHOLOGUE AFUA_5G00600)-RELATED"/>
    <property type="match status" value="1"/>
</dbReference>
<dbReference type="Pfam" id="PF05630">
    <property type="entry name" value="NPP1"/>
    <property type="match status" value="1"/>
</dbReference>
<dbReference type="PIRSF" id="PIRSF029958">
    <property type="entry name" value="Necrosis-inducing_protein"/>
    <property type="match status" value="1"/>
</dbReference>
<keyword id="KW-0325">Glycoprotein</keyword>
<keyword id="KW-0964">Secreted</keyword>
<keyword id="KW-0732">Signal</keyword>
<keyword id="KW-0843">Virulence</keyword>